<evidence type="ECO:0000250" key="1"/>
<evidence type="ECO:0000255" key="2"/>
<evidence type="ECO:0000255" key="3">
    <source>
        <dbReference type="PROSITE-ProRule" id="PRU00597"/>
    </source>
</evidence>
<evidence type="ECO:0000256" key="4">
    <source>
        <dbReference type="SAM" id="MobiDB-lite"/>
    </source>
</evidence>
<evidence type="ECO:0000305" key="5"/>
<accession>Q4WBW4</accession>
<comment type="function">
    <text evidence="1">Acetylxylan esterase involved in the hydrolysis of xylan, a major structural heterogeneous polysaccharide found in plant biomass representing the second most abundant polysaccharide in the biosphere, after cellulose. Degrades acetylated xylans by cleaving acetyl side groups from the hetero-xylan backbone (By similarity).</text>
</comment>
<comment type="catalytic activity">
    <reaction>
        <text>Deacetylation of xylans and xylo-oligosaccharides.</text>
        <dbReference type="EC" id="3.1.1.72"/>
    </reaction>
</comment>
<comment type="pathway">
    <text>Glycan degradation; xylan degradation.</text>
</comment>
<comment type="subunit">
    <text evidence="1">Monomer.</text>
</comment>
<comment type="subcellular location">
    <subcellularLocation>
        <location evidence="1">Secreted</location>
    </subcellularLocation>
</comment>
<comment type="domain">
    <text>Has a modular structure: a carbohydrate esterase catalytic module at the N-terminus, a linker rich in serines and threonines, and a C-terminal carbohydrate-binding module (CBM). The genes for catalytic modules and CBMs seem to have evolved separately and have been linked by gene fusion.</text>
</comment>
<comment type="similarity">
    <text evidence="5">Belongs to the carbohydrate esterase 1 (CE1) family. AxeA subfamily.</text>
</comment>
<dbReference type="EC" id="3.1.1.72"/>
<dbReference type="EMBL" id="AAHF01000013">
    <property type="protein sequence ID" value="EAL85420.1"/>
    <property type="molecule type" value="Genomic_DNA"/>
</dbReference>
<dbReference type="RefSeq" id="XP_747458.1">
    <property type="nucleotide sequence ID" value="XM_742365.1"/>
</dbReference>
<dbReference type="SMR" id="Q4WBW4"/>
<dbReference type="STRING" id="330879.Q4WBW4"/>
<dbReference type="ESTHER" id="aspfu-axe1">
    <property type="family name" value="Esterase_phb"/>
</dbReference>
<dbReference type="GlyCosmos" id="Q4WBW4">
    <property type="glycosylation" value="1 site, No reported glycans"/>
</dbReference>
<dbReference type="EnsemblFungi" id="EAL85420">
    <property type="protein sequence ID" value="EAL85420"/>
    <property type="gene ID" value="AFUA_8G06570"/>
</dbReference>
<dbReference type="GeneID" id="3504738"/>
<dbReference type="KEGG" id="afm:AFUA_8G06570"/>
<dbReference type="VEuPathDB" id="FungiDB:Afu8g06570"/>
<dbReference type="eggNOG" id="ENOG502QTDU">
    <property type="taxonomic scope" value="Eukaryota"/>
</dbReference>
<dbReference type="HOGENOM" id="CLU_027551_1_1_1"/>
<dbReference type="InParanoid" id="Q4WBW4"/>
<dbReference type="OMA" id="WGPNLQG"/>
<dbReference type="OrthoDB" id="2425929at2759"/>
<dbReference type="UniPathway" id="UPA00114"/>
<dbReference type="Proteomes" id="UP000002530">
    <property type="component" value="Chromosome 8"/>
</dbReference>
<dbReference type="GO" id="GO:0005576">
    <property type="term" value="C:extracellular region"/>
    <property type="evidence" value="ECO:0007669"/>
    <property type="project" value="UniProtKB-SubCell"/>
</dbReference>
<dbReference type="GO" id="GO:0046555">
    <property type="term" value="F:acetylxylan esterase activity"/>
    <property type="evidence" value="ECO:0007669"/>
    <property type="project" value="UniProtKB-EC"/>
</dbReference>
<dbReference type="GO" id="GO:0030248">
    <property type="term" value="F:cellulose binding"/>
    <property type="evidence" value="ECO:0007669"/>
    <property type="project" value="InterPro"/>
</dbReference>
<dbReference type="GO" id="GO:0030245">
    <property type="term" value="P:cellulose catabolic process"/>
    <property type="evidence" value="ECO:0007669"/>
    <property type="project" value="UniProtKB-KW"/>
</dbReference>
<dbReference type="GO" id="GO:0045493">
    <property type="term" value="P:xylan catabolic process"/>
    <property type="evidence" value="ECO:0007669"/>
    <property type="project" value="UniProtKB-UniPathway"/>
</dbReference>
<dbReference type="Gene3D" id="3.40.50.1820">
    <property type="entry name" value="alpha/beta hydrolase"/>
    <property type="match status" value="1"/>
</dbReference>
<dbReference type="InterPro" id="IPR029058">
    <property type="entry name" value="AB_hydrolase_fold"/>
</dbReference>
<dbReference type="InterPro" id="IPR000254">
    <property type="entry name" value="Cellulose-bd_dom_fun"/>
</dbReference>
<dbReference type="InterPro" id="IPR010126">
    <property type="entry name" value="Esterase_phb"/>
</dbReference>
<dbReference type="InterPro" id="IPR050955">
    <property type="entry name" value="Plant_Biomass_Hydrol_Est"/>
</dbReference>
<dbReference type="NCBIfam" id="TIGR01840">
    <property type="entry name" value="esterase_phb"/>
    <property type="match status" value="1"/>
</dbReference>
<dbReference type="PANTHER" id="PTHR43037:SF3">
    <property type="entry name" value="FERULOYL ESTERASE B"/>
    <property type="match status" value="1"/>
</dbReference>
<dbReference type="PANTHER" id="PTHR43037">
    <property type="entry name" value="UNNAMED PRODUCT-RELATED"/>
    <property type="match status" value="1"/>
</dbReference>
<dbReference type="Pfam" id="PF00734">
    <property type="entry name" value="CBM_1"/>
    <property type="match status" value="1"/>
</dbReference>
<dbReference type="Pfam" id="PF10503">
    <property type="entry name" value="Esterase_PHB"/>
    <property type="match status" value="1"/>
</dbReference>
<dbReference type="SMART" id="SM00236">
    <property type="entry name" value="fCBD"/>
    <property type="match status" value="1"/>
</dbReference>
<dbReference type="SUPFAM" id="SSF53474">
    <property type="entry name" value="alpha/beta-Hydrolases"/>
    <property type="match status" value="2"/>
</dbReference>
<dbReference type="PROSITE" id="PS00562">
    <property type="entry name" value="CBM1_1"/>
    <property type="match status" value="1"/>
</dbReference>
<dbReference type="PROSITE" id="PS51164">
    <property type="entry name" value="CBM1_2"/>
    <property type="match status" value="1"/>
</dbReference>
<reference key="1">
    <citation type="journal article" date="2005" name="Nature">
        <title>Genomic sequence of the pathogenic and allergenic filamentous fungus Aspergillus fumigatus.</title>
        <authorList>
            <person name="Nierman W.C."/>
            <person name="Pain A."/>
            <person name="Anderson M.J."/>
            <person name="Wortman J.R."/>
            <person name="Kim H.S."/>
            <person name="Arroyo J."/>
            <person name="Berriman M."/>
            <person name="Abe K."/>
            <person name="Archer D.B."/>
            <person name="Bermejo C."/>
            <person name="Bennett J.W."/>
            <person name="Bowyer P."/>
            <person name="Chen D."/>
            <person name="Collins M."/>
            <person name="Coulsen R."/>
            <person name="Davies R."/>
            <person name="Dyer P.S."/>
            <person name="Farman M.L."/>
            <person name="Fedorova N."/>
            <person name="Fedorova N.D."/>
            <person name="Feldblyum T.V."/>
            <person name="Fischer R."/>
            <person name="Fosker N."/>
            <person name="Fraser A."/>
            <person name="Garcia J.L."/>
            <person name="Garcia M.J."/>
            <person name="Goble A."/>
            <person name="Goldman G.H."/>
            <person name="Gomi K."/>
            <person name="Griffith-Jones S."/>
            <person name="Gwilliam R."/>
            <person name="Haas B.J."/>
            <person name="Haas H."/>
            <person name="Harris D.E."/>
            <person name="Horiuchi H."/>
            <person name="Huang J."/>
            <person name="Humphray S."/>
            <person name="Jimenez J."/>
            <person name="Keller N."/>
            <person name="Khouri H."/>
            <person name="Kitamoto K."/>
            <person name="Kobayashi T."/>
            <person name="Konzack S."/>
            <person name="Kulkarni R."/>
            <person name="Kumagai T."/>
            <person name="Lafton A."/>
            <person name="Latge J.-P."/>
            <person name="Li W."/>
            <person name="Lord A."/>
            <person name="Lu C."/>
            <person name="Majoros W.H."/>
            <person name="May G.S."/>
            <person name="Miller B.L."/>
            <person name="Mohamoud Y."/>
            <person name="Molina M."/>
            <person name="Monod M."/>
            <person name="Mouyna I."/>
            <person name="Mulligan S."/>
            <person name="Murphy L.D."/>
            <person name="O'Neil S."/>
            <person name="Paulsen I."/>
            <person name="Penalva M.A."/>
            <person name="Pertea M."/>
            <person name="Price C."/>
            <person name="Pritchard B.L."/>
            <person name="Quail M.A."/>
            <person name="Rabbinowitsch E."/>
            <person name="Rawlins N."/>
            <person name="Rajandream M.A."/>
            <person name="Reichard U."/>
            <person name="Renauld H."/>
            <person name="Robson G.D."/>
            <person name="Rodriguez de Cordoba S."/>
            <person name="Rodriguez-Pena J.M."/>
            <person name="Ronning C.M."/>
            <person name="Rutter S."/>
            <person name="Salzberg S.L."/>
            <person name="Sanchez M."/>
            <person name="Sanchez-Ferrero J.C."/>
            <person name="Saunders D."/>
            <person name="Seeger K."/>
            <person name="Squares R."/>
            <person name="Squares S."/>
            <person name="Takeuchi M."/>
            <person name="Tekaia F."/>
            <person name="Turner G."/>
            <person name="Vazquez de Aldana C.R."/>
            <person name="Weidman J."/>
            <person name="White O."/>
            <person name="Woodward J.R."/>
            <person name="Yu J.-H."/>
            <person name="Fraser C.M."/>
            <person name="Galagan J.E."/>
            <person name="Asai K."/>
            <person name="Machida M."/>
            <person name="Hall N."/>
            <person name="Barrell B.G."/>
            <person name="Denning D.W."/>
        </authorList>
    </citation>
    <scope>NUCLEOTIDE SEQUENCE [LARGE SCALE GENOMIC DNA]</scope>
    <source>
        <strain>ATCC MYA-4609 / CBS 101355 / FGSC A1100 / Af293</strain>
    </source>
</reference>
<name>AXE1_ASPFU</name>
<feature type="signal peptide" evidence="2">
    <location>
        <begin position="1"/>
        <end position="19"/>
    </location>
</feature>
<feature type="chain" id="PRO_0000393479" description="Probable acetylxylan esterase A">
    <location>
        <begin position="20"/>
        <end position="371"/>
    </location>
</feature>
<feature type="domain" description="CBM1" evidence="3">
    <location>
        <begin position="335"/>
        <end position="371"/>
    </location>
</feature>
<feature type="region of interest" description="Catalytic">
    <location>
        <begin position="32"/>
        <end position="304"/>
    </location>
</feature>
<feature type="region of interest" description="Ser/Thr-rich linker">
    <location>
        <begin position="305"/>
        <end position="336"/>
    </location>
</feature>
<feature type="region of interest" description="Disordered" evidence="4">
    <location>
        <begin position="305"/>
        <end position="335"/>
    </location>
</feature>
<feature type="compositionally biased region" description="Low complexity" evidence="4">
    <location>
        <begin position="307"/>
        <end position="335"/>
    </location>
</feature>
<feature type="active site" description="Charge relay system" evidence="1">
    <location>
        <position position="149"/>
    </location>
</feature>
<feature type="glycosylation site" description="N-linked (GlcNAc...) asparagine" evidence="2">
    <location>
        <position position="191"/>
    </location>
</feature>
<gene>
    <name type="primary">axeA</name>
    <name type="synonym">aceA</name>
    <name type="ORF">AFUA_8G06570</name>
</gene>
<protein>
    <recommendedName>
        <fullName>Probable acetylxylan esterase A</fullName>
        <ecNumber>3.1.1.72</ecNumber>
    </recommendedName>
</protein>
<proteinExistence type="inferred from homology"/>
<keyword id="KW-0119">Carbohydrate metabolism</keyword>
<keyword id="KW-0136">Cellulose degradation</keyword>
<keyword id="KW-0325">Glycoprotein</keyword>
<keyword id="KW-0378">Hydrolase</keyword>
<keyword id="KW-0624">Polysaccharide degradation</keyword>
<keyword id="KW-1185">Reference proteome</keyword>
<keyword id="KW-0964">Secreted</keyword>
<keyword id="KW-0719">Serine esterase</keyword>
<keyword id="KW-0732">Signal</keyword>
<sequence>MRALSVFVALFSFLALSSASPGQDVAKRVTSGSLQQVTNFGSNPSGTLMYIYVPNNLATKPGIVVAIHYCTGTAQAYYTGSPYAQLAEKYGFIVIYPQSPYSGTCWDVSSQSALTHNGGGDSNSIANMVTWTISQYNADTSKVFVTGSSSGAMMTNVMAATYPELFAAATVYSGVPAGCFYSSSNQVNGWNSSCAQGNVISTPEVWGGIAKAMYPGYTGPRPRMQIYHGSVDTTLYPQNYYETCKQWAGVFGYNYNSPQSTQSNTPQANYQTTIWGPNLQGIFATGVGHTVPIHGEQDMEWFGFTGGSSSTTTTATTPPTTSTTTSSGGSSTSTGVAEHWGQCGGNGWTGPTACASGYTCTVINEWYSQCL</sequence>
<organism>
    <name type="scientific">Aspergillus fumigatus (strain ATCC MYA-4609 / CBS 101355 / FGSC A1100 / Af293)</name>
    <name type="common">Neosartorya fumigata</name>
    <dbReference type="NCBI Taxonomy" id="330879"/>
    <lineage>
        <taxon>Eukaryota</taxon>
        <taxon>Fungi</taxon>
        <taxon>Dikarya</taxon>
        <taxon>Ascomycota</taxon>
        <taxon>Pezizomycotina</taxon>
        <taxon>Eurotiomycetes</taxon>
        <taxon>Eurotiomycetidae</taxon>
        <taxon>Eurotiales</taxon>
        <taxon>Aspergillaceae</taxon>
        <taxon>Aspergillus</taxon>
        <taxon>Aspergillus subgen. Fumigati</taxon>
    </lineage>
</organism>